<comment type="function">
    <text evidence="5 6 7 8">Involved in the regulation of pedicel length and of CLAVATA pathways controlling stem cell identity at shoot and flower meristems.</text>
</comment>
<comment type="catalytic activity">
    <reaction>
        <text>O-phospho-L-seryl-[protein] + H2O = L-seryl-[protein] + phosphate</text>
        <dbReference type="Rhea" id="RHEA:20629"/>
        <dbReference type="Rhea" id="RHEA-COMP:9863"/>
        <dbReference type="Rhea" id="RHEA-COMP:11604"/>
        <dbReference type="ChEBI" id="CHEBI:15377"/>
        <dbReference type="ChEBI" id="CHEBI:29999"/>
        <dbReference type="ChEBI" id="CHEBI:43474"/>
        <dbReference type="ChEBI" id="CHEBI:83421"/>
        <dbReference type="EC" id="3.1.3.16"/>
    </reaction>
</comment>
<comment type="catalytic activity">
    <reaction>
        <text>O-phospho-L-threonyl-[protein] + H2O = L-threonyl-[protein] + phosphate</text>
        <dbReference type="Rhea" id="RHEA:47004"/>
        <dbReference type="Rhea" id="RHEA-COMP:11060"/>
        <dbReference type="Rhea" id="RHEA-COMP:11605"/>
        <dbReference type="ChEBI" id="CHEBI:15377"/>
        <dbReference type="ChEBI" id="CHEBI:30013"/>
        <dbReference type="ChEBI" id="CHEBI:43474"/>
        <dbReference type="ChEBI" id="CHEBI:61977"/>
        <dbReference type="EC" id="3.1.3.16"/>
    </reaction>
</comment>
<comment type="cofactor">
    <cofactor evidence="1">
        <name>Mg(2+)</name>
        <dbReference type="ChEBI" id="CHEBI:18420"/>
    </cofactor>
    <cofactor evidence="1">
        <name>Mn(2+)</name>
        <dbReference type="ChEBI" id="CHEBI:29035"/>
    </cofactor>
    <text evidence="1">Binds 2 magnesium or manganese ions per subunit.</text>
</comment>
<comment type="activity regulation">
    <text evidence="6">Insensitive to okadaic acid.</text>
</comment>
<comment type="subcellular location">
    <subcellularLocation>
        <location evidence="9">Nucleus</location>
    </subcellularLocation>
</comment>
<comment type="tissue specificity">
    <text evidence="6 7">Expressed in roots, leaves, stems, inflorescences, flowers and throughout the shoot meristem.</text>
</comment>
<comment type="developmental stage">
    <text evidence="6">Expressed throughout development of the floral meristem, in all four floral whorls and as floral organs matured, limited to the ovule.</text>
</comment>
<comment type="domain">
    <text>The N-terminal domain (1-233) has a regulatory function and inhibits phosphatase activity.</text>
</comment>
<comment type="domain">
    <text>The conserved PP2C phosphatase domain (271-833) is interrupted by an insertion of approximately 200 amino acids.</text>
</comment>
<comment type="disruption phenotype">
    <text evidence="7">Loss-of-function mutant pol-6 (T-DNA insertion) shows suppression of clavata mutant phenotypes. The catalytic activity of POL may be functionally replaced by the activity of PLL1. Pol and pll1 double mutant is seedling lethal.</text>
</comment>
<comment type="similarity">
    <text evidence="9">Belongs to the PP2C family.</text>
</comment>
<comment type="sequence caution" evidence="9">
    <conflict type="erroneous gene model prediction">
        <sequence resource="EMBL-CDS" id="AAC34239"/>
    </conflict>
</comment>
<accession>Q8RWN7</accession>
<accession>O80732</accession>
<organism>
    <name type="scientific">Arabidopsis thaliana</name>
    <name type="common">Mouse-ear cress</name>
    <dbReference type="NCBI Taxonomy" id="3702"/>
    <lineage>
        <taxon>Eukaryota</taxon>
        <taxon>Viridiplantae</taxon>
        <taxon>Streptophyta</taxon>
        <taxon>Embryophyta</taxon>
        <taxon>Tracheophyta</taxon>
        <taxon>Spermatophyta</taxon>
        <taxon>Magnoliopsida</taxon>
        <taxon>eudicotyledons</taxon>
        <taxon>Gunneridae</taxon>
        <taxon>Pentapetalae</taxon>
        <taxon>rosids</taxon>
        <taxon>malvids</taxon>
        <taxon>Brassicales</taxon>
        <taxon>Brassicaceae</taxon>
        <taxon>Camelineae</taxon>
        <taxon>Arabidopsis</taxon>
    </lineage>
</organism>
<feature type="chain" id="PRO_0000301258" description="Protein phosphatase 2C 32">
    <location>
        <begin position="1"/>
        <end position="856"/>
    </location>
</feature>
<feature type="domain" description="PPM-type phosphatase" evidence="3">
    <location>
        <begin position="269"/>
        <end position="835"/>
    </location>
</feature>
<feature type="region of interest" description="Disordered" evidence="4">
    <location>
        <begin position="340"/>
        <end position="373"/>
    </location>
</feature>
<feature type="region of interest" description="Disordered" evidence="4">
    <location>
        <begin position="388"/>
        <end position="407"/>
    </location>
</feature>
<feature type="region of interest" description="Disordered" evidence="4">
    <location>
        <begin position="446"/>
        <end position="485"/>
    </location>
</feature>
<feature type="compositionally biased region" description="Low complexity" evidence="4">
    <location>
        <begin position="395"/>
        <end position="407"/>
    </location>
</feature>
<feature type="compositionally biased region" description="Polar residues" evidence="4">
    <location>
        <begin position="471"/>
        <end position="485"/>
    </location>
</feature>
<feature type="binding site" evidence="1">
    <location>
        <position position="307"/>
    </location>
    <ligand>
        <name>Mn(2+)</name>
        <dbReference type="ChEBI" id="CHEBI:29035"/>
        <label>1</label>
    </ligand>
</feature>
<feature type="binding site" evidence="1">
    <location>
        <position position="307"/>
    </location>
    <ligand>
        <name>Mn(2+)</name>
        <dbReference type="ChEBI" id="CHEBI:29035"/>
        <label>2</label>
    </ligand>
</feature>
<feature type="binding site" evidence="1">
    <location>
        <position position="308"/>
    </location>
    <ligand>
        <name>Mn(2+)</name>
        <dbReference type="ChEBI" id="CHEBI:29035"/>
        <label>1</label>
    </ligand>
</feature>
<feature type="binding site" evidence="1">
    <location>
        <position position="763"/>
    </location>
    <ligand>
        <name>Mn(2+)</name>
        <dbReference type="ChEBI" id="CHEBI:29035"/>
        <label>2</label>
    </ligand>
</feature>
<feature type="binding site" evidence="1">
    <location>
        <position position="826"/>
    </location>
    <ligand>
        <name>Mn(2+)</name>
        <dbReference type="ChEBI" id="CHEBI:29035"/>
        <label>2</label>
    </ligand>
</feature>
<feature type="modified residue" description="Phosphoserine" evidence="10 11">
    <location>
        <position position="152"/>
    </location>
</feature>
<feature type="modified residue" description="Phosphoserine" evidence="10 11">
    <location>
        <position position="189"/>
    </location>
</feature>
<feature type="modified residue" description="Phosphoserine" evidence="2">
    <location>
        <position position="201"/>
    </location>
</feature>
<feature type="mutagenesis site" description="In pol-1; reduced catalytic activity and partial phenotypic suppression of mutations within CLAVATA." evidence="6">
    <original>E</original>
    <variation>K</variation>
    <location>
        <position position="287"/>
    </location>
</feature>
<feature type="mutagenesis site" description="In pol-3; weak phenotypic suppression of mutations within CLAVATA." evidence="6">
    <location>
        <begin position="443"/>
        <end position="856"/>
    </location>
</feature>
<feature type="sequence conflict" description="In Ref. 4; AAM12971." evidence="9" ref="4">
    <original>F</original>
    <variation>Y</variation>
    <location>
        <position position="769"/>
    </location>
</feature>
<evidence type="ECO:0000250" key="1"/>
<evidence type="ECO:0000250" key="2">
    <source>
        <dbReference type="UniProtKB" id="O82302"/>
    </source>
</evidence>
<evidence type="ECO:0000255" key="3">
    <source>
        <dbReference type="PROSITE-ProRule" id="PRU01082"/>
    </source>
</evidence>
<evidence type="ECO:0000256" key="4">
    <source>
        <dbReference type="SAM" id="MobiDB-lite"/>
    </source>
</evidence>
<evidence type="ECO:0000269" key="5">
    <source>
    </source>
</evidence>
<evidence type="ECO:0000269" key="6">
    <source>
    </source>
</evidence>
<evidence type="ECO:0000269" key="7">
    <source>
    </source>
</evidence>
<evidence type="ECO:0000269" key="8">
    <source>
    </source>
</evidence>
<evidence type="ECO:0000305" key="9"/>
<evidence type="ECO:0007744" key="10">
    <source>
    </source>
</evidence>
<evidence type="ECO:0007744" key="11">
    <source>
    </source>
</evidence>
<keyword id="KW-0217">Developmental protein</keyword>
<keyword id="KW-0378">Hydrolase</keyword>
<keyword id="KW-0460">Magnesium</keyword>
<keyword id="KW-0464">Manganese</keyword>
<keyword id="KW-0479">Metal-binding</keyword>
<keyword id="KW-0539">Nucleus</keyword>
<keyword id="KW-0597">Phosphoprotein</keyword>
<keyword id="KW-0904">Protein phosphatase</keyword>
<keyword id="KW-1185">Reference proteome</keyword>
<protein>
    <recommendedName>
        <fullName>Protein phosphatase 2C 32</fullName>
        <shortName>AtPP2C32</shortName>
        <ecNumber>3.1.3.16</ecNumber>
    </recommendedName>
    <alternativeName>
        <fullName>Protein POLTERGEIST</fullName>
    </alternativeName>
    <alternativeName>
        <fullName>Protein phosphatase 2C POL</fullName>
        <shortName>PP2C POL</shortName>
    </alternativeName>
</protein>
<name>P2C32_ARATH</name>
<sequence length="856" mass="95571">MGNGTSRVVGCFVPSNDKNGVDLEFLEPLDEGLGHSFCYVRPSIFESPDITPSNSERFTIDSSTIDSETLTGSFRNDIVDDPSFLNRHNSKGLAETTFKAISGASVSANVSTARTGNQMALCSSDVLEPAASFESTSSFASIPLQPLPRGGSGPLNGFMSGPLERGFASGPLDRNNGFMSGPIEKGVMSGPLDVSDRSNFSAPLSFRRKKPRFQRFMRSVSGPMKSTLARTFSRRSGGLSWMHRFFLHPETRVSWAVGKDGKLHGEDPESCLESNRNLQWAHGKAGEDRVHVVLSEEQGWLFIGIYDGFSGPDAPDFVMSHLYKAIDKELEGLLWDYEEPSEDNQLQPDQEPPTEENMCDPESISEQHSKSVVAESEEVMIDDISSLGNTDTQIADGPPGDSAGPGKKSMRLYELLQLEQWEGEEIGLKRYGGNVALNNMTNQVENPSTSGGGAGNDPCTTDRSALDGIPNSGQRHGTKKSQISSKIRRMYQKQKSLRKKLFPWSYDWHREEGICVEEKIVESSGPIRRRWSGTVDHDAVLRAMARALESTEEAYMDMVEKSLDINPELALMGSCVLVMLMKDQDVYVMNVGDSRAILAQERLHDRHSNPGFGNDEGIGHKSRSRESLVRIELDRISEESPIHNQATPISVSNKNRDVTSYRLKMRAVQLSSDHSTSVEEEIWRIRSEHPEDDQSILKDRVKGQLKVTRAFGAGFLKKPNFNEALLEMFQVEYIGTDPYITCEPCTVHHRLTSSDRFMVLSSDGLYEYFSNEEVVAHVTWFIENVPEGDPAQYLIAELLSRAATKNGMEFHDLLDIPQGDRRKYHDDVSVMVVSLEGRIWRSSGQYYPERKQKFNR</sequence>
<gene>
    <name type="primary">POL</name>
    <name type="ordered locus">At2g46920</name>
    <name type="ORF">F14M4.25</name>
</gene>
<dbReference type="EC" id="3.1.3.16"/>
<dbReference type="EMBL" id="AC004411">
    <property type="protein sequence ID" value="AAC34239.1"/>
    <property type="status" value="ALT_SEQ"/>
    <property type="molecule type" value="Genomic_DNA"/>
</dbReference>
<dbReference type="EMBL" id="CP002685">
    <property type="protein sequence ID" value="AEC10772.1"/>
    <property type="molecule type" value="Genomic_DNA"/>
</dbReference>
<dbReference type="EMBL" id="CP002685">
    <property type="protein sequence ID" value="AEC10773.1"/>
    <property type="molecule type" value="Genomic_DNA"/>
</dbReference>
<dbReference type="EMBL" id="CP002685">
    <property type="protein sequence ID" value="ANM63296.1"/>
    <property type="molecule type" value="Genomic_DNA"/>
</dbReference>
<dbReference type="EMBL" id="CP002685">
    <property type="protein sequence ID" value="ANM63297.1"/>
    <property type="molecule type" value="Genomic_DNA"/>
</dbReference>
<dbReference type="EMBL" id="AY092972">
    <property type="protein sequence ID" value="AAM12971.1"/>
    <property type="molecule type" value="mRNA"/>
</dbReference>
<dbReference type="PIR" id="T02195">
    <property type="entry name" value="T02195"/>
</dbReference>
<dbReference type="RefSeq" id="NP_001325391.1">
    <property type="nucleotide sequence ID" value="NM_001337224.1"/>
</dbReference>
<dbReference type="RefSeq" id="NP_001325392.1">
    <property type="nucleotide sequence ID" value="NM_001337223.1"/>
</dbReference>
<dbReference type="RefSeq" id="NP_850463.1">
    <property type="nucleotide sequence ID" value="NM_180132.3"/>
</dbReference>
<dbReference type="RefSeq" id="NP_850464.1">
    <property type="nucleotide sequence ID" value="NM_180133.2"/>
</dbReference>
<dbReference type="SMR" id="Q8RWN7"/>
<dbReference type="FunCoup" id="Q8RWN7">
    <property type="interactions" value="1113"/>
</dbReference>
<dbReference type="IntAct" id="Q8RWN7">
    <property type="interactions" value="1"/>
</dbReference>
<dbReference type="MINT" id="Q8RWN7"/>
<dbReference type="STRING" id="3702.Q8RWN7"/>
<dbReference type="iPTMnet" id="Q8RWN7"/>
<dbReference type="PaxDb" id="3702-AT2G46920.1"/>
<dbReference type="ProteomicsDB" id="248712"/>
<dbReference type="EnsemblPlants" id="AT2G46920.1">
    <property type="protein sequence ID" value="AT2G46920.1"/>
    <property type="gene ID" value="AT2G46920"/>
</dbReference>
<dbReference type="EnsemblPlants" id="AT2G46920.2">
    <property type="protein sequence ID" value="AT2G46920.2"/>
    <property type="gene ID" value="AT2G46920"/>
</dbReference>
<dbReference type="EnsemblPlants" id="AT2G46920.3">
    <property type="protein sequence ID" value="AT2G46920.3"/>
    <property type="gene ID" value="AT2G46920"/>
</dbReference>
<dbReference type="EnsemblPlants" id="AT2G46920.4">
    <property type="protein sequence ID" value="AT2G46920.4"/>
    <property type="gene ID" value="AT2G46920"/>
</dbReference>
<dbReference type="GeneID" id="819306"/>
<dbReference type="Gramene" id="AT2G46920.1">
    <property type="protein sequence ID" value="AT2G46920.1"/>
    <property type="gene ID" value="AT2G46920"/>
</dbReference>
<dbReference type="Gramene" id="AT2G46920.2">
    <property type="protein sequence ID" value="AT2G46920.2"/>
    <property type="gene ID" value="AT2G46920"/>
</dbReference>
<dbReference type="Gramene" id="AT2G46920.3">
    <property type="protein sequence ID" value="AT2G46920.3"/>
    <property type="gene ID" value="AT2G46920"/>
</dbReference>
<dbReference type="Gramene" id="AT2G46920.4">
    <property type="protein sequence ID" value="AT2G46920.4"/>
    <property type="gene ID" value="AT2G46920"/>
</dbReference>
<dbReference type="KEGG" id="ath:AT2G46920"/>
<dbReference type="Araport" id="AT2G46920"/>
<dbReference type="TAIR" id="AT2G46920">
    <property type="gene designation" value="POL"/>
</dbReference>
<dbReference type="eggNOG" id="KOG0700">
    <property type="taxonomic scope" value="Eukaryota"/>
</dbReference>
<dbReference type="HOGENOM" id="CLU_013173_12_1_1"/>
<dbReference type="InParanoid" id="Q8RWN7"/>
<dbReference type="OMA" id="VFMSGPI"/>
<dbReference type="OrthoDB" id="420076at2759"/>
<dbReference type="PRO" id="PR:Q8RWN7"/>
<dbReference type="Proteomes" id="UP000006548">
    <property type="component" value="Chromosome 2"/>
</dbReference>
<dbReference type="ExpressionAtlas" id="Q8RWN7">
    <property type="expression patterns" value="baseline and differential"/>
</dbReference>
<dbReference type="GO" id="GO:0005634">
    <property type="term" value="C:nucleus"/>
    <property type="evidence" value="ECO:0007669"/>
    <property type="project" value="UniProtKB-SubCell"/>
</dbReference>
<dbReference type="GO" id="GO:0005886">
    <property type="term" value="C:plasma membrane"/>
    <property type="evidence" value="ECO:0000314"/>
    <property type="project" value="TAIR"/>
</dbReference>
<dbReference type="GO" id="GO:0046872">
    <property type="term" value="F:metal ion binding"/>
    <property type="evidence" value="ECO:0007669"/>
    <property type="project" value="UniProtKB-KW"/>
</dbReference>
<dbReference type="GO" id="GO:0005543">
    <property type="term" value="F:phospholipid binding"/>
    <property type="evidence" value="ECO:0000314"/>
    <property type="project" value="TAIR"/>
</dbReference>
<dbReference type="GO" id="GO:0004722">
    <property type="term" value="F:protein serine/threonine phosphatase activity"/>
    <property type="evidence" value="ECO:0000314"/>
    <property type="project" value="TAIR"/>
</dbReference>
<dbReference type="GO" id="GO:0010074">
    <property type="term" value="P:maintenance of meristem identity"/>
    <property type="evidence" value="ECO:0000316"/>
    <property type="project" value="TAIR"/>
</dbReference>
<dbReference type="GO" id="GO:0006355">
    <property type="term" value="P:regulation of DNA-templated transcription"/>
    <property type="evidence" value="ECO:0000316"/>
    <property type="project" value="TAIR"/>
</dbReference>
<dbReference type="CDD" id="cd00143">
    <property type="entry name" value="PP2Cc"/>
    <property type="match status" value="1"/>
</dbReference>
<dbReference type="Gene3D" id="3.60.40.10">
    <property type="entry name" value="PPM-type phosphatase domain"/>
    <property type="match status" value="2"/>
</dbReference>
<dbReference type="InterPro" id="IPR015655">
    <property type="entry name" value="PP2C"/>
</dbReference>
<dbReference type="InterPro" id="IPR036457">
    <property type="entry name" value="PPM-type-like_dom_sf"/>
</dbReference>
<dbReference type="InterPro" id="IPR001932">
    <property type="entry name" value="PPM-type_phosphatase-like_dom"/>
</dbReference>
<dbReference type="PANTHER" id="PTHR13832">
    <property type="entry name" value="PROTEIN PHOSPHATASE 2C"/>
    <property type="match status" value="1"/>
</dbReference>
<dbReference type="PANTHER" id="PTHR13832:SF688">
    <property type="entry name" value="PROTEIN PHOSPHATASE 2C 32"/>
    <property type="match status" value="1"/>
</dbReference>
<dbReference type="Pfam" id="PF00481">
    <property type="entry name" value="PP2C"/>
    <property type="match status" value="2"/>
</dbReference>
<dbReference type="SMART" id="SM00332">
    <property type="entry name" value="PP2Cc"/>
    <property type="match status" value="1"/>
</dbReference>
<dbReference type="SUPFAM" id="SSF81606">
    <property type="entry name" value="PP2C-like"/>
    <property type="match status" value="1"/>
</dbReference>
<dbReference type="PROSITE" id="PS51746">
    <property type="entry name" value="PPM_2"/>
    <property type="match status" value="1"/>
</dbReference>
<proteinExistence type="evidence at protein level"/>
<reference key="1">
    <citation type="journal article" date="2003" name="Curr. Biol.">
        <title>POLTERGEIST encodes a protein phosphatase 2C that regulates CLAVATA pathways controlling stem cell identity at Arabidopsis shoot and flower meristems.</title>
        <authorList>
            <person name="Yu L.P."/>
            <person name="Miller A.K."/>
            <person name="Clark S.E."/>
        </authorList>
    </citation>
    <scope>NUCLEOTIDE SEQUENCE [GENOMIC DNA]</scope>
    <scope>MUTAGENESIS OF GLU-287 AND 443-GLN--ARG-856</scope>
    <scope>TISSUE SPECIFICITY</scope>
    <scope>DEVELOPMENTAL STAGE</scope>
    <scope>FUNCTION</scope>
    <scope>ACTIVITY REGULATION</scope>
</reference>
<reference key="2">
    <citation type="journal article" date="1999" name="Nature">
        <title>Sequence and analysis of chromosome 2 of the plant Arabidopsis thaliana.</title>
        <authorList>
            <person name="Lin X."/>
            <person name="Kaul S."/>
            <person name="Rounsley S.D."/>
            <person name="Shea T.P."/>
            <person name="Benito M.-I."/>
            <person name="Town C.D."/>
            <person name="Fujii C.Y."/>
            <person name="Mason T.M."/>
            <person name="Bowman C.L."/>
            <person name="Barnstead M.E."/>
            <person name="Feldblyum T.V."/>
            <person name="Buell C.R."/>
            <person name="Ketchum K.A."/>
            <person name="Lee J.J."/>
            <person name="Ronning C.M."/>
            <person name="Koo H.L."/>
            <person name="Moffat K.S."/>
            <person name="Cronin L.A."/>
            <person name="Shen M."/>
            <person name="Pai G."/>
            <person name="Van Aken S."/>
            <person name="Umayam L."/>
            <person name="Tallon L.J."/>
            <person name="Gill J.E."/>
            <person name="Adams M.D."/>
            <person name="Carrera A.J."/>
            <person name="Creasy T.H."/>
            <person name="Goodman H.M."/>
            <person name="Somerville C.R."/>
            <person name="Copenhaver G.P."/>
            <person name="Preuss D."/>
            <person name="Nierman W.C."/>
            <person name="White O."/>
            <person name="Eisen J.A."/>
            <person name="Salzberg S.L."/>
            <person name="Fraser C.M."/>
            <person name="Venter J.C."/>
        </authorList>
    </citation>
    <scope>NUCLEOTIDE SEQUENCE [LARGE SCALE GENOMIC DNA]</scope>
    <source>
        <strain>cv. Columbia</strain>
    </source>
</reference>
<reference key="3">
    <citation type="journal article" date="2017" name="Plant J.">
        <title>Araport11: a complete reannotation of the Arabidopsis thaliana reference genome.</title>
        <authorList>
            <person name="Cheng C.Y."/>
            <person name="Krishnakumar V."/>
            <person name="Chan A.P."/>
            <person name="Thibaud-Nissen F."/>
            <person name="Schobel S."/>
            <person name="Town C.D."/>
        </authorList>
    </citation>
    <scope>GENOME REANNOTATION</scope>
    <source>
        <strain>cv. Columbia</strain>
    </source>
</reference>
<reference key="4">
    <citation type="journal article" date="2003" name="Science">
        <title>Empirical analysis of transcriptional activity in the Arabidopsis genome.</title>
        <authorList>
            <person name="Yamada K."/>
            <person name="Lim J."/>
            <person name="Dale J.M."/>
            <person name="Chen H."/>
            <person name="Shinn P."/>
            <person name="Palm C.J."/>
            <person name="Southwick A.M."/>
            <person name="Wu H.C."/>
            <person name="Kim C.J."/>
            <person name="Nguyen M."/>
            <person name="Pham P.K."/>
            <person name="Cheuk R.F."/>
            <person name="Karlin-Newmann G."/>
            <person name="Liu S.X."/>
            <person name="Lam B."/>
            <person name="Sakano H."/>
            <person name="Wu T."/>
            <person name="Yu G."/>
            <person name="Miranda M."/>
            <person name="Quach H.L."/>
            <person name="Tripp M."/>
            <person name="Chang C.H."/>
            <person name="Lee J.M."/>
            <person name="Toriumi M.J."/>
            <person name="Chan M.M."/>
            <person name="Tang C.C."/>
            <person name="Onodera C.S."/>
            <person name="Deng J.M."/>
            <person name="Akiyama K."/>
            <person name="Ansari Y."/>
            <person name="Arakawa T."/>
            <person name="Banh J."/>
            <person name="Banno F."/>
            <person name="Bowser L."/>
            <person name="Brooks S.Y."/>
            <person name="Carninci P."/>
            <person name="Chao Q."/>
            <person name="Choy N."/>
            <person name="Enju A."/>
            <person name="Goldsmith A.D."/>
            <person name="Gurjal M."/>
            <person name="Hansen N.F."/>
            <person name="Hayashizaki Y."/>
            <person name="Johnson-Hopson C."/>
            <person name="Hsuan V.W."/>
            <person name="Iida K."/>
            <person name="Karnes M."/>
            <person name="Khan S."/>
            <person name="Koesema E."/>
            <person name="Ishida J."/>
            <person name="Jiang P.X."/>
            <person name="Jones T."/>
            <person name="Kawai J."/>
            <person name="Kamiya A."/>
            <person name="Meyers C."/>
            <person name="Nakajima M."/>
            <person name="Narusaka M."/>
            <person name="Seki M."/>
            <person name="Sakurai T."/>
            <person name="Satou M."/>
            <person name="Tamse R."/>
            <person name="Vaysberg M."/>
            <person name="Wallender E.K."/>
            <person name="Wong C."/>
            <person name="Yamamura Y."/>
            <person name="Yuan S."/>
            <person name="Shinozaki K."/>
            <person name="Davis R.W."/>
            <person name="Theologis A."/>
            <person name="Ecker J.R."/>
        </authorList>
    </citation>
    <scope>NUCLEOTIDE SEQUENCE [LARGE SCALE MRNA]</scope>
    <source>
        <strain>cv. Columbia</strain>
    </source>
</reference>
<reference key="5">
    <citation type="journal article" date="2000" name="Development">
        <title>POLTERGEIST functions to regulate meristem development downstream of the CLAVATA loci.</title>
        <authorList>
            <person name="Yu L.P."/>
            <person name="Simon E.J."/>
            <person name="Trotochaud A.E."/>
            <person name="Clark S.E."/>
        </authorList>
    </citation>
    <scope>FUNCTION</scope>
</reference>
<reference key="6">
    <citation type="journal article" date="2003" name="Mol. Cell. Proteomics">
        <title>Large-scale analysis of in vivo phosphorylated membrane proteins by immobilized metal ion affinity chromatography and mass spectrometry.</title>
        <authorList>
            <person name="Nuehse T.S."/>
            <person name="Stensballe A."/>
            <person name="Jensen O.N."/>
            <person name="Peck S.C."/>
        </authorList>
    </citation>
    <scope>PHOSPHORYLATION [LARGE SCALE ANALYSIS] AT SER-152 AND SER-189</scope>
    <scope>IDENTIFICATION BY MASS SPECTROMETRY [LARGE SCALE ANALYSIS]</scope>
    <source>
        <strain>cv. La-0</strain>
    </source>
</reference>
<reference key="7">
    <citation type="journal article" date="2004" name="Plant Cell">
        <title>Phosphoproteomics of the Arabidopsis plasma membrane and a new phosphorylation site database.</title>
        <authorList>
            <person name="Nuehse T.S."/>
            <person name="Stensballe A."/>
            <person name="Jensen O.N."/>
            <person name="Peck S.C."/>
        </authorList>
    </citation>
    <scope>PHOSPHORYLATION [LARGE SCALE ANALYSIS] AT SER-152 AND SER-189</scope>
    <scope>IDENTIFICATION BY MASS SPECTROMETRY [LARGE SCALE ANALYSIS]</scope>
</reference>
<reference key="8">
    <citation type="journal article" date="2005" name="Dev. Biol.">
        <title>POL and related phosphatases are dosage-sensitive regulators of meristem and organ development in Arabidopsis.</title>
        <authorList>
            <person name="Song S.-K."/>
            <person name="Clark S.E."/>
        </authorList>
    </citation>
    <scope>FUNCTION</scope>
    <scope>TISSUE SPECIFICITY</scope>
    <scope>GENE FAMILY</scope>
    <scope>NOMENCLATURE</scope>
    <scope>DISRUPTION PHENOTYPE</scope>
</reference>
<reference key="9">
    <citation type="journal article" date="2006" name="Development">
        <title>POL and PLL1 phosphatases are CLAVATA1 signaling intermediates required for Arabidopsis shoot and floral stem cells.</title>
        <authorList>
            <person name="Song S.-K."/>
            <person name="Lee M.M."/>
            <person name="Clark S.E."/>
        </authorList>
    </citation>
    <scope>FUNCTION</scope>
</reference>
<reference key="10">
    <citation type="journal article" date="2008" name="BMC Genomics">
        <title>Genome-wide and expression analysis of protein phosphatase 2C in rice and Arabidopsis.</title>
        <authorList>
            <person name="Xue T."/>
            <person name="Wang D."/>
            <person name="Zhang S."/>
            <person name="Ehlting J."/>
            <person name="Ni F."/>
            <person name="Jacab S."/>
            <person name="Zheng C."/>
            <person name="Zhong Y."/>
        </authorList>
    </citation>
    <scope>GENE FAMILY</scope>
    <scope>NOMENCLATURE</scope>
</reference>